<name>SCOT1_PIG</name>
<reference key="1">
    <citation type="journal article" date="1992" name="J. Biol. Chem.">
        <title>Sequence of a cDNA clone encoding pig heart mitochondrial CoA transferase.</title>
        <authorList>
            <person name="Lin T."/>
            <person name="Bridger W.A."/>
        </authorList>
    </citation>
    <scope>NUCLEOTIDE SEQUENCE [MRNA]</scope>
    <scope>PROTEIN SEQUENCE OF 40-70 AND 296-305</scope>
    <source>
        <tissue>Heart</tissue>
    </source>
</reference>
<reference key="2">
    <citation type="submission" date="2009-11" db="EMBL/GenBank/DDBJ databases">
        <authorList>
            <consortium name="Swine Genome Sequencing Consortium."/>
        </authorList>
    </citation>
    <scope>NUCLEOTIDE SEQUENCE [LARGE SCALE GENOMIC DNA]</scope>
</reference>
<reference key="3">
    <citation type="journal article" date="1994" name="Protein Sci.">
        <title>Identification of glutamate 344 as the catalytic residue in the active site of pig heart CoA transferase.</title>
        <authorList>
            <person name="Rochet J.C."/>
            <person name="Bridger W.A."/>
        </authorList>
    </citation>
    <scope>ACTIVE SITE</scope>
</reference>
<reference key="4">
    <citation type="journal article" date="2001" name="Biochemistry">
        <title>Dimeric pig heart succinate-coenzyme A transferase uses only one subunit to support catalysis.</title>
        <authorList>
            <person name="Lloyd A.J."/>
            <person name="Shoolingin-Jordan P.M."/>
        </authorList>
    </citation>
    <scope>FUNCTION</scope>
    <scope>CATALYTIC ACTIVITY</scope>
</reference>
<reference key="5">
    <citation type="journal article" date="2002" name="Biochemistry">
        <title>Structure of the mammalian CoA transferase from pig heart.</title>
        <authorList>
            <person name="Bateman K.S."/>
            <person name="Brownie E.R."/>
            <person name="Wolodko W.T."/>
            <person name="Fraser M.E."/>
        </authorList>
    </citation>
    <scope>X-RAY CRYSTALLOGRAPHY (2.5 ANGSTROMS) OF 40-520</scope>
    <scope>SUBUNIT</scope>
    <source>
        <tissue>Heart</tissue>
    </source>
</reference>
<reference key="6">
    <citation type="submission" date="2002-12" db="PDB data bank">
        <title>Succinate:Coenzyme-A transferase deficiency: A structural view of pathogenic mutations.</title>
        <authorList>
            <person name="Mitchell E.P."/>
            <person name="Lloyd A.J."/>
            <person name="Lewis G."/>
            <person name="Shoolingin-Jordan P."/>
        </authorList>
    </citation>
    <scope>X-RAY CRYSTALLOGRAPHY (2.40 ANGSTROMS) OF 40-520</scope>
    <scope>SUBUNIT</scope>
    <source>
        <tissue>Heart</tissue>
    </source>
</reference>
<reference key="7">
    <citation type="journal article" date="2004" name="Acta Crystallogr. D">
        <title>Structure of the CoA transferase from pig heart to 1.7 A resolution.</title>
        <authorList>
            <person name="Coros A.M."/>
            <person name="Swenson L."/>
            <person name="Wolodko W.T."/>
            <person name="Fraser M.E."/>
        </authorList>
    </citation>
    <scope>X-RAY CRYSTALLOGRAPHY (1.70 ANGSTROMS) OF 40-520</scope>
    <scope>SUBUNIT</scope>
    <source>
        <tissue>Heart</tissue>
    </source>
</reference>
<reference key="8">
    <citation type="journal article" date="2007" name="Biochemistry">
        <title>Identification of the cysteine residue exposed by the conformational change in pig heart succinyl-CoA:3-ketoacid coenzyme A transferase on binding coenzyme A.</title>
        <authorList>
            <person name="Tammam S.D."/>
            <person name="Rochet J.C."/>
            <person name="Fraser M.E."/>
        </authorList>
    </citation>
    <scope>X-RAY CRYSTALLOGRAPHY (2.00 ANGSTROMS) OF 40-520 OF MUTANTS ALA/SER-67</scope>
    <scope>FUNCTION</scope>
    <scope>CATALYTIC ACTIVITY</scope>
    <scope>SUBUNIT</scope>
    <scope>MUTAGENESIS OF CYS-67 AND CYS-235</scope>
    <scope>REACTION MECHANISM</scope>
    <scope>BIOPHYSICOCHEMICAL PROPERTIES</scope>
    <source>
        <tissue>Heart</tissue>
    </source>
</reference>
<reference key="9">
    <citation type="journal article" date="2010" name="Acta Crystallogr. D">
        <title>The high-resolution structure of pig heart succinyl-CoA:3-oxoacid coenzyme A transferase.</title>
        <authorList>
            <person name="Coker S.F."/>
            <person name="Lloyd A.J."/>
            <person name="Mitchell E."/>
            <person name="Lewis G.R."/>
            <person name="Coker A.R."/>
            <person name="Shoolingin-Jordan P.M."/>
        </authorList>
    </citation>
    <scope>X-RAY CRYSTALLOGRAPHY (1.50 ANGSTROMS) OF 40-520</scope>
    <scope>SUBUNIT</scope>
    <source>
        <tissue>Heart</tissue>
    </source>
</reference>
<reference key="10">
    <citation type="journal article" date="2010" name="Biochemistry">
        <title>Catalytic role of the conformational change in succinyl-CoA:3-oxoacid CoA transferase on binding CoA.</title>
        <authorList>
            <person name="Fraser M.E."/>
            <person name="Hayakawa K."/>
            <person name="Brown W.D."/>
        </authorList>
    </citation>
    <scope>X-RAY CRYSTALLOGRAPHY (2.30 ANGSTROMS) OF 40-517 IN COMPLEX WITH REACTION INTERMEDIATE</scope>
    <scope>FUNCTION</scope>
    <scope>SUBUNIT</scope>
    <source>
        <tissue>Heart</tissue>
    </source>
</reference>
<feature type="transit peptide" description="Mitochondrion" evidence="8">
    <location>
        <begin position="1"/>
        <end position="39"/>
    </location>
</feature>
<feature type="chain" id="PRO_0000002415" description="Succinyl-CoA:3-ketoacid coenzyme A transferase 1, mitochondrial">
    <location>
        <begin position="40"/>
        <end position="520"/>
    </location>
</feature>
<feature type="active site" description="5-glutamyl coenzyme A thioester intermediate" evidence="4 12">
    <location>
        <position position="344"/>
    </location>
</feature>
<feature type="modified residue" description="Phosphoserine" evidence="2">
    <location>
        <position position="170"/>
    </location>
</feature>
<feature type="modified residue" description="N6-succinyllysine" evidence="3">
    <location>
        <position position="185"/>
    </location>
</feature>
<feature type="modified residue" description="N6-succinyllysine" evidence="3">
    <location>
        <position position="418"/>
    </location>
</feature>
<feature type="modified residue" description="N6-succinyllysine" evidence="3">
    <location>
        <position position="421"/>
    </location>
</feature>
<feature type="modified residue" description="N6-succinyllysine" evidence="3">
    <location>
        <position position="455"/>
    </location>
</feature>
<feature type="mutagenesis site" description="Decreases KM for acetoacetyl-CoA 3-fold. No effect on KM for acetoacetate, succinyl-CoA and succinate." evidence="9">
    <original>C</original>
    <variation>A</variation>
    <location>
        <position position="67"/>
    </location>
</feature>
<feature type="mutagenesis site" description="Decreases KM for acetoacetate and acetoacetyl-CoA 2-fold. Increases KM for succinate 2-fold. Decreases KM for succinyl-CoA nearly 4-fold. Strongly reduces catalytic activity." evidence="9">
    <original>C</original>
    <variation>S</variation>
    <location>
        <position position="67"/>
    </location>
</feature>
<feature type="mutagenesis site" description="Similar specific activity to wild-type." evidence="9">
    <original>C</original>
    <variation>S</variation>
    <location>
        <position position="235"/>
    </location>
</feature>
<feature type="sequence conflict" description="In Ref. 1; AAA31019." evidence="17" ref="1">
    <original>S</original>
    <variation>R</variation>
    <location>
        <position position="480"/>
    </location>
</feature>
<feature type="strand" evidence="24">
    <location>
        <begin position="41"/>
        <end position="44"/>
    </location>
</feature>
<feature type="helix" evidence="24">
    <location>
        <begin position="46"/>
        <end position="50"/>
    </location>
</feature>
<feature type="strand" evidence="24">
    <location>
        <begin position="58"/>
        <end position="61"/>
    </location>
</feature>
<feature type="helix" evidence="24">
    <location>
        <begin position="71"/>
        <end position="80"/>
    </location>
</feature>
<feature type="strand" evidence="24">
    <location>
        <begin position="84"/>
        <end position="88"/>
    </location>
</feature>
<feature type="helix" evidence="24">
    <location>
        <begin position="100"/>
        <end position="104"/>
    </location>
</feature>
<feature type="strand" evidence="24">
    <location>
        <begin position="108"/>
        <end position="114"/>
    </location>
</feature>
<feature type="helix" evidence="24">
    <location>
        <begin position="120"/>
        <end position="127"/>
    </location>
</feature>
<feature type="strand" evidence="24">
    <location>
        <begin position="130"/>
        <end position="135"/>
    </location>
</feature>
<feature type="helix" evidence="24">
    <location>
        <begin position="138"/>
        <end position="149"/>
    </location>
</feature>
<feature type="strand" evidence="24">
    <location>
        <begin position="154"/>
        <end position="158"/>
    </location>
</feature>
<feature type="turn" evidence="24">
    <location>
        <begin position="159"/>
        <end position="162"/>
    </location>
</feature>
<feature type="helix" evidence="24">
    <location>
        <begin position="164"/>
        <end position="167"/>
    </location>
</feature>
<feature type="strand" evidence="24">
    <location>
        <begin position="171"/>
        <end position="174"/>
    </location>
</feature>
<feature type="strand" evidence="24">
    <location>
        <begin position="178"/>
        <end position="183"/>
    </location>
</feature>
<feature type="strand" evidence="24">
    <location>
        <begin position="189"/>
        <end position="192"/>
    </location>
</feature>
<feature type="strand" evidence="24">
    <location>
        <begin position="195"/>
        <end position="201"/>
    </location>
</feature>
<feature type="strand" evidence="24">
    <location>
        <begin position="205"/>
        <end position="216"/>
    </location>
</feature>
<feature type="helix" evidence="24">
    <location>
        <begin position="225"/>
        <end position="227"/>
    </location>
</feature>
<feature type="helix" evidence="24">
    <location>
        <begin position="231"/>
        <end position="234"/>
    </location>
</feature>
<feature type="strand" evidence="24">
    <location>
        <begin position="237"/>
        <end position="249"/>
    </location>
</feature>
<feature type="helix" evidence="24">
    <location>
        <begin position="256"/>
        <end position="258"/>
    </location>
</feature>
<feature type="helix" evidence="24">
    <location>
        <begin position="263"/>
        <end position="265"/>
    </location>
</feature>
<feature type="strand" evidence="24">
    <location>
        <begin position="268"/>
        <end position="271"/>
    </location>
</feature>
<feature type="helix" evidence="24">
    <location>
        <begin position="302"/>
        <end position="309"/>
    </location>
</feature>
<feature type="helix" evidence="24">
    <location>
        <begin position="310"/>
        <end position="312"/>
    </location>
</feature>
<feature type="strand" evidence="24">
    <location>
        <begin position="317"/>
        <end position="321"/>
    </location>
</feature>
<feature type="helix" evidence="24">
    <location>
        <begin position="325"/>
        <end position="329"/>
    </location>
</feature>
<feature type="helix" evidence="24">
    <location>
        <begin position="330"/>
        <end position="332"/>
    </location>
</feature>
<feature type="strand" evidence="24">
    <location>
        <begin position="339"/>
        <end position="343"/>
    </location>
</feature>
<feature type="turn" evidence="24">
    <location>
        <begin position="344"/>
        <end position="346"/>
    </location>
</feature>
<feature type="strand" evidence="24">
    <location>
        <begin position="347"/>
        <end position="350"/>
    </location>
</feature>
<feature type="helix" evidence="24">
    <location>
        <begin position="356"/>
        <end position="358"/>
    </location>
</feature>
<feature type="strand" evidence="24">
    <location>
        <begin position="368"/>
        <end position="370"/>
    </location>
</feature>
<feature type="strand" evidence="24">
    <location>
        <begin position="373"/>
        <end position="379"/>
    </location>
</feature>
<feature type="helix" evidence="24">
    <location>
        <begin position="382"/>
        <end position="390"/>
    </location>
</feature>
<feature type="strand" evidence="24">
    <location>
        <begin position="395"/>
        <end position="399"/>
    </location>
</feature>
<feature type="strand" evidence="24">
    <location>
        <begin position="402"/>
        <end position="405"/>
    </location>
</feature>
<feature type="strand" evidence="23">
    <location>
        <begin position="413"/>
        <end position="415"/>
    </location>
</feature>
<feature type="turn" evidence="24">
    <location>
        <begin position="416"/>
        <end position="418"/>
    </location>
</feature>
<feature type="helix" evidence="24">
    <location>
        <begin position="426"/>
        <end position="429"/>
    </location>
</feature>
<feature type="strand" evidence="24">
    <location>
        <begin position="435"/>
        <end position="440"/>
    </location>
</feature>
<feature type="strand" evidence="22">
    <location>
        <begin position="443"/>
        <end position="445"/>
    </location>
</feature>
<feature type="helix" evidence="24">
    <location>
        <begin position="446"/>
        <end position="448"/>
    </location>
</feature>
<feature type="strand" evidence="24">
    <location>
        <begin position="450"/>
        <end position="455"/>
    </location>
</feature>
<feature type="strand" evidence="24">
    <location>
        <begin position="461"/>
        <end position="464"/>
    </location>
</feature>
<feature type="strand" evidence="24">
    <location>
        <begin position="468"/>
        <end position="470"/>
    </location>
</feature>
<feature type="strand" evidence="24">
    <location>
        <begin position="472"/>
        <end position="479"/>
    </location>
</feature>
<feature type="turn" evidence="24">
    <location>
        <begin position="480"/>
        <end position="482"/>
    </location>
</feature>
<feature type="strand" evidence="24">
    <location>
        <begin position="483"/>
        <end position="489"/>
    </location>
</feature>
<feature type="helix" evidence="24">
    <location>
        <begin position="495"/>
        <end position="500"/>
    </location>
</feature>
<feature type="strand" evidence="21">
    <location>
        <begin position="502"/>
        <end position="504"/>
    </location>
</feature>
<feature type="strand" evidence="24">
    <location>
        <begin position="507"/>
        <end position="514"/>
    </location>
</feature>
<keyword id="KW-0002">3D-structure</keyword>
<keyword id="KW-0903">Direct protein sequencing</keyword>
<keyword id="KW-0443">Lipid metabolism</keyword>
<keyword id="KW-0496">Mitochondrion</keyword>
<keyword id="KW-0597">Phosphoprotein</keyword>
<keyword id="KW-1185">Reference proteome</keyword>
<keyword id="KW-0808">Transferase</keyword>
<keyword id="KW-0809">Transit peptide</keyword>
<accession>Q29551</accession>
<accession>F1SMH7</accession>
<dbReference type="EC" id="2.8.3.5" evidence="5 9"/>
<dbReference type="EMBL" id="M80534">
    <property type="protein sequence ID" value="AAA31019.1"/>
    <property type="molecule type" value="mRNA"/>
</dbReference>
<dbReference type="EMBL" id="CU993811">
    <property type="status" value="NOT_ANNOTATED_CDS"/>
    <property type="molecule type" value="Genomic_DNA"/>
</dbReference>
<dbReference type="EMBL" id="FP017290">
    <property type="status" value="NOT_ANNOTATED_CDS"/>
    <property type="molecule type" value="Genomic_DNA"/>
</dbReference>
<dbReference type="PIR" id="A41771">
    <property type="entry name" value="A41771"/>
</dbReference>
<dbReference type="RefSeq" id="NP_999103.1">
    <property type="nucleotide sequence ID" value="NM_213938.1"/>
</dbReference>
<dbReference type="PDB" id="1M3E">
    <property type="method" value="X-ray"/>
    <property type="resolution" value="2.50 A"/>
    <property type="chains" value="A/B/C/D=40-520"/>
</dbReference>
<dbReference type="PDB" id="1O9L">
    <property type="method" value="X-ray"/>
    <property type="resolution" value="2.40 A"/>
    <property type="chains" value="A/B/C/D=40-520"/>
</dbReference>
<dbReference type="PDB" id="1OOY">
    <property type="method" value="X-ray"/>
    <property type="resolution" value="1.70 A"/>
    <property type="chains" value="A/B=40-520"/>
</dbReference>
<dbReference type="PDB" id="1OOZ">
    <property type="method" value="X-ray"/>
    <property type="resolution" value="2.10 A"/>
    <property type="chains" value="A/B=40-520"/>
</dbReference>
<dbReference type="PDB" id="1OPE">
    <property type="method" value="X-ray"/>
    <property type="resolution" value="2.50 A"/>
    <property type="chains" value="A/B=40-520"/>
</dbReference>
<dbReference type="PDB" id="2NRB">
    <property type="method" value="X-ray"/>
    <property type="resolution" value="2.00 A"/>
    <property type="chains" value="A/B/C/D=40-520"/>
</dbReference>
<dbReference type="PDB" id="2NRC">
    <property type="method" value="X-ray"/>
    <property type="resolution" value="2.05 A"/>
    <property type="chains" value="A/B/C/D=40-520"/>
</dbReference>
<dbReference type="PDB" id="3K6M">
    <property type="method" value="X-ray"/>
    <property type="resolution" value="1.50 A"/>
    <property type="chains" value="A/B/C/D=40-520"/>
</dbReference>
<dbReference type="PDB" id="3OXO">
    <property type="method" value="X-ray"/>
    <property type="resolution" value="2.30 A"/>
    <property type="chains" value="A/B/C/D/E/F/G/H=40-517"/>
</dbReference>
<dbReference type="PDBsum" id="1M3E"/>
<dbReference type="PDBsum" id="1O9L"/>
<dbReference type="PDBsum" id="1OOY"/>
<dbReference type="PDBsum" id="1OOZ"/>
<dbReference type="PDBsum" id="1OPE"/>
<dbReference type="PDBsum" id="2NRB"/>
<dbReference type="PDBsum" id="2NRC"/>
<dbReference type="PDBsum" id="3K6M"/>
<dbReference type="PDBsum" id="3OXO"/>
<dbReference type="SMR" id="Q29551"/>
<dbReference type="FunCoup" id="Q29551">
    <property type="interactions" value="993"/>
</dbReference>
<dbReference type="STRING" id="9823.ENSSSCP00000068644"/>
<dbReference type="PaxDb" id="9823-ENSSSCP00000017870"/>
<dbReference type="PeptideAtlas" id="Q29551"/>
<dbReference type="Ensembl" id="ENSSSCT00000044789.3">
    <property type="protein sequence ID" value="ENSSSCP00000052664.1"/>
    <property type="gene ID" value="ENSSSCG00000016863.5"/>
</dbReference>
<dbReference type="Ensembl" id="ENSSSCT00015084294.1">
    <property type="protein sequence ID" value="ENSSSCP00015034175.1"/>
    <property type="gene ID" value="ENSSSCG00015062938.1"/>
</dbReference>
<dbReference type="Ensembl" id="ENSSSCT00025052144.1">
    <property type="protein sequence ID" value="ENSSSCP00025022246.1"/>
    <property type="gene ID" value="ENSSSCG00025038332.1"/>
</dbReference>
<dbReference type="Ensembl" id="ENSSSCT00030078266.1">
    <property type="protein sequence ID" value="ENSSSCP00030035767.1"/>
    <property type="gene ID" value="ENSSSCG00030056134.1"/>
</dbReference>
<dbReference type="Ensembl" id="ENSSSCT00040083222.1">
    <property type="protein sequence ID" value="ENSSSCP00040036256.1"/>
    <property type="gene ID" value="ENSSSCG00040060882.1"/>
</dbReference>
<dbReference type="Ensembl" id="ENSSSCT00050075004.1">
    <property type="protein sequence ID" value="ENSSSCP00050032359.1"/>
    <property type="gene ID" value="ENSSSCG00050054966.1"/>
</dbReference>
<dbReference type="Ensembl" id="ENSSSCT00055012324.1">
    <property type="protein sequence ID" value="ENSSSCP00055009717.1"/>
    <property type="gene ID" value="ENSSSCG00055006211.1"/>
</dbReference>
<dbReference type="Ensembl" id="ENSSSCT00065089233.1">
    <property type="protein sequence ID" value="ENSSSCP00065039011.1"/>
    <property type="gene ID" value="ENSSSCG00065065004.1"/>
</dbReference>
<dbReference type="Ensembl" id="ENSSSCT00070010135.1">
    <property type="protein sequence ID" value="ENSSSCP00070008322.1"/>
    <property type="gene ID" value="ENSSSCG00070005220.1"/>
</dbReference>
<dbReference type="Ensembl" id="ENSSSCT00070010147.1">
    <property type="protein sequence ID" value="ENSSSCP00070008334.1"/>
    <property type="gene ID" value="ENSSSCG00070005220.1"/>
</dbReference>
<dbReference type="Ensembl" id="ENSSSCT00090007276">
    <property type="protein sequence ID" value="ENSSSCP00090004346"/>
    <property type="gene ID" value="ENSSSCG00090003996"/>
</dbReference>
<dbReference type="Ensembl" id="ENSSSCT00110033865">
    <property type="protein sequence ID" value="ENSSSCP00110022941"/>
    <property type="gene ID" value="ENSSSCG00110017511"/>
</dbReference>
<dbReference type="Ensembl" id="ENSSSCT00115005231">
    <property type="protein sequence ID" value="ENSSSCP00115004863"/>
    <property type="gene ID" value="ENSSSCG00115003001"/>
</dbReference>
<dbReference type="GeneID" id="396978"/>
<dbReference type="KEGG" id="ssc:396978"/>
<dbReference type="CTD" id="5019"/>
<dbReference type="VGNC" id="VGNC:91113">
    <property type="gene designation" value="OXCT1"/>
</dbReference>
<dbReference type="eggNOG" id="KOG3822">
    <property type="taxonomic scope" value="Eukaryota"/>
</dbReference>
<dbReference type="GeneTree" id="ENSGT00390000009130"/>
<dbReference type="HOGENOM" id="CLU_019942_2_0_1"/>
<dbReference type="InParanoid" id="Q29551"/>
<dbReference type="OMA" id="VKTMGQI"/>
<dbReference type="OrthoDB" id="1933379at2759"/>
<dbReference type="BRENDA" id="2.8.3.5">
    <property type="organism ID" value="6170"/>
</dbReference>
<dbReference type="Reactome" id="R-SSC-77108">
    <property type="pathway name" value="Utilization of Ketone Bodies"/>
</dbReference>
<dbReference type="Reactome" id="R-SSC-9837999">
    <property type="pathway name" value="Mitochondrial protein degradation"/>
</dbReference>
<dbReference type="UniPathway" id="UPA00929">
    <property type="reaction ID" value="UER00894"/>
</dbReference>
<dbReference type="EvolutionaryTrace" id="Q29551"/>
<dbReference type="Proteomes" id="UP000008227">
    <property type="component" value="Chromosome 16"/>
</dbReference>
<dbReference type="Proteomes" id="UP000314985">
    <property type="component" value="Chromosome 16"/>
</dbReference>
<dbReference type="Proteomes" id="UP000694570">
    <property type="component" value="Unplaced"/>
</dbReference>
<dbReference type="Proteomes" id="UP000694571">
    <property type="component" value="Unplaced"/>
</dbReference>
<dbReference type="Proteomes" id="UP000694720">
    <property type="component" value="Unplaced"/>
</dbReference>
<dbReference type="Proteomes" id="UP000694722">
    <property type="component" value="Unplaced"/>
</dbReference>
<dbReference type="Proteomes" id="UP000694723">
    <property type="component" value="Unplaced"/>
</dbReference>
<dbReference type="Proteomes" id="UP000694724">
    <property type="component" value="Unplaced"/>
</dbReference>
<dbReference type="Proteomes" id="UP000694725">
    <property type="component" value="Unplaced"/>
</dbReference>
<dbReference type="Proteomes" id="UP000694726">
    <property type="component" value="Unplaced"/>
</dbReference>
<dbReference type="Proteomes" id="UP000694727">
    <property type="component" value="Unplaced"/>
</dbReference>
<dbReference type="Proteomes" id="UP000694728">
    <property type="component" value="Unplaced"/>
</dbReference>
<dbReference type="Bgee" id="ENSSSCG00000016863">
    <property type="expression patterns" value="Expressed in heart left ventricle and 45 other cell types or tissues"/>
</dbReference>
<dbReference type="ExpressionAtlas" id="Q29551">
    <property type="expression patterns" value="baseline and differential"/>
</dbReference>
<dbReference type="GO" id="GO:0005739">
    <property type="term" value="C:mitochondrion"/>
    <property type="evidence" value="ECO:0000250"/>
    <property type="project" value="UniProtKB"/>
</dbReference>
<dbReference type="GO" id="GO:0042803">
    <property type="term" value="F:protein homodimerization activity"/>
    <property type="evidence" value="ECO:0000314"/>
    <property type="project" value="UniProtKB"/>
</dbReference>
<dbReference type="GO" id="GO:0008260">
    <property type="term" value="F:succinyl-CoA:3-oxo-acid CoA-transferase activity"/>
    <property type="evidence" value="ECO:0000314"/>
    <property type="project" value="UniProtKB"/>
</dbReference>
<dbReference type="GO" id="GO:0046952">
    <property type="term" value="P:ketone body catabolic process"/>
    <property type="evidence" value="ECO:0007669"/>
    <property type="project" value="InterPro"/>
</dbReference>
<dbReference type="GO" id="GO:1902224">
    <property type="term" value="P:ketone body metabolic process"/>
    <property type="evidence" value="ECO:0000250"/>
    <property type="project" value="UniProtKB"/>
</dbReference>
<dbReference type="FunFam" id="3.40.1080.10:FF:000001">
    <property type="entry name" value="Succinyl-coa:3-ketoacid-coenzyme a transferase subunit b"/>
    <property type="match status" value="1"/>
</dbReference>
<dbReference type="FunFam" id="3.40.1080.10:FF:000002">
    <property type="entry name" value="Succinyl-CoA:3-ketoacid-coenzyme A transferase, mitochondrial"/>
    <property type="match status" value="1"/>
</dbReference>
<dbReference type="Gene3D" id="3.40.1080.10">
    <property type="entry name" value="Glutaconate Coenzyme A-transferase"/>
    <property type="match status" value="2"/>
</dbReference>
<dbReference type="InterPro" id="IPR012792">
    <property type="entry name" value="3-oxoacid_CoA-transf_A"/>
</dbReference>
<dbReference type="InterPro" id="IPR012791">
    <property type="entry name" value="3-oxoacid_CoA-transf_B"/>
</dbReference>
<dbReference type="InterPro" id="IPR014388">
    <property type="entry name" value="3-oxoacid_CoA-transferase"/>
</dbReference>
<dbReference type="InterPro" id="IPR004165">
    <property type="entry name" value="CoA_trans_fam_I"/>
</dbReference>
<dbReference type="InterPro" id="IPR004164">
    <property type="entry name" value="CoA_transf_AS"/>
</dbReference>
<dbReference type="InterPro" id="IPR004163">
    <property type="entry name" value="CoA_transf_BS"/>
</dbReference>
<dbReference type="InterPro" id="IPR037171">
    <property type="entry name" value="NagB/RpiA_transferase-like"/>
</dbReference>
<dbReference type="NCBIfam" id="TIGR02429">
    <property type="entry name" value="pcaI_scoA_fam"/>
    <property type="match status" value="1"/>
</dbReference>
<dbReference type="NCBIfam" id="TIGR02428">
    <property type="entry name" value="pcaJ_scoB_fam"/>
    <property type="match status" value="1"/>
</dbReference>
<dbReference type="PANTHER" id="PTHR13707">
    <property type="entry name" value="KETOACID-COENZYME A TRANSFERASE"/>
    <property type="match status" value="1"/>
</dbReference>
<dbReference type="PANTHER" id="PTHR13707:SF30">
    <property type="entry name" value="SUCCINYL-COA:3-KETOACID COENZYME A TRANSFERASE 1, MITOCHONDRIAL"/>
    <property type="match status" value="1"/>
</dbReference>
<dbReference type="Pfam" id="PF01144">
    <property type="entry name" value="CoA_trans"/>
    <property type="match status" value="2"/>
</dbReference>
<dbReference type="PIRSF" id="PIRSF000858">
    <property type="entry name" value="SCOT-t"/>
    <property type="match status" value="1"/>
</dbReference>
<dbReference type="SMART" id="SM00882">
    <property type="entry name" value="CoA_trans"/>
    <property type="match status" value="2"/>
</dbReference>
<dbReference type="SUPFAM" id="SSF100950">
    <property type="entry name" value="NagB/RpiA/CoA transferase-like"/>
    <property type="match status" value="2"/>
</dbReference>
<dbReference type="PROSITE" id="PS01273">
    <property type="entry name" value="COA_TRANSF_1"/>
    <property type="match status" value="1"/>
</dbReference>
<dbReference type="PROSITE" id="PS01274">
    <property type="entry name" value="COA_TRANSF_2"/>
    <property type="match status" value="1"/>
</dbReference>
<sequence>MAALTLLSSRLRLCASAYRSGGAWSQGCAGYFSTSTRRHTKFYTDAVEAVKDIPNGATVLVGGFGLCGIPENLIGALLKTGVKELTAVSNNAGVDNFGLGLLLQSKQIKRMISSYVGENAEFERQYLAGELEVELTPQGTLAERIRAGGAGVPAFYTSTGYGTLVQEGGSPIKYNKDGSIAIASKPREVREFNGQHFILEEAIRGDFALVKAWKADQAGNVTFRKSARNFNLPMCKAAETTVVEVEEIVDIGSFAPEDIHIPKIYVHRLVKGEKYEKRIERLSVRKEEDVKTRSGKLGDNVRERIIKRAALEFEDGMYANLGIGIPLLASNFISPNMTVHLQSENGILGLGPYPLQNEVDADLINAGKETVTVLPGASYFSSDESFAMIRGGHVNLTMLGAMQVSKYGDLANWMIPGKLVKGMGGAMDLVSSAKTKVVVTMEHSAKGNAHKIMEKCTLPLTGKQCVNRIITEKAVFDVDSKKGLTLIELWEGLTVDDIKKSTGCDFAVSPKLIPMQQVTT</sequence>
<organism>
    <name type="scientific">Sus scrofa</name>
    <name type="common">Pig</name>
    <dbReference type="NCBI Taxonomy" id="9823"/>
    <lineage>
        <taxon>Eukaryota</taxon>
        <taxon>Metazoa</taxon>
        <taxon>Chordata</taxon>
        <taxon>Craniata</taxon>
        <taxon>Vertebrata</taxon>
        <taxon>Euteleostomi</taxon>
        <taxon>Mammalia</taxon>
        <taxon>Eutheria</taxon>
        <taxon>Laurasiatheria</taxon>
        <taxon>Artiodactyla</taxon>
        <taxon>Suina</taxon>
        <taxon>Suidae</taxon>
        <taxon>Sus</taxon>
    </lineage>
</organism>
<evidence type="ECO:0000250" key="1">
    <source>
        <dbReference type="UniProtKB" id="B2GV06"/>
    </source>
</evidence>
<evidence type="ECO:0000250" key="2">
    <source>
        <dbReference type="UniProtKB" id="P55809"/>
    </source>
</evidence>
<evidence type="ECO:0000250" key="3">
    <source>
        <dbReference type="UniProtKB" id="Q9D0K2"/>
    </source>
</evidence>
<evidence type="ECO:0000255" key="4">
    <source>
        <dbReference type="PROSITE-ProRule" id="PRU10034"/>
    </source>
</evidence>
<evidence type="ECO:0000269" key="5">
    <source>
    </source>
</evidence>
<evidence type="ECO:0000269" key="6">
    <source>
    </source>
</evidence>
<evidence type="ECO:0000269" key="7">
    <source>
    </source>
</evidence>
<evidence type="ECO:0000269" key="8">
    <source>
    </source>
</evidence>
<evidence type="ECO:0000269" key="9">
    <source>
    </source>
</evidence>
<evidence type="ECO:0000269" key="10">
    <source>
    </source>
</evidence>
<evidence type="ECO:0000269" key="11">
    <source>
    </source>
</evidence>
<evidence type="ECO:0000269" key="12">
    <source>
    </source>
</evidence>
<evidence type="ECO:0000269" key="13">
    <source ref="6"/>
</evidence>
<evidence type="ECO:0000303" key="14">
    <source>
    </source>
</evidence>
<evidence type="ECO:0000303" key="15">
    <source>
    </source>
</evidence>
<evidence type="ECO:0000303" key="16">
    <source>
    </source>
</evidence>
<evidence type="ECO:0000305" key="17"/>
<evidence type="ECO:0000305" key="18">
    <source>
    </source>
</evidence>
<evidence type="ECO:0000305" key="19">
    <source>
    </source>
</evidence>
<evidence type="ECO:0000305" key="20">
    <source>
    </source>
</evidence>
<evidence type="ECO:0007829" key="21">
    <source>
        <dbReference type="PDB" id="1M3E"/>
    </source>
</evidence>
<evidence type="ECO:0007829" key="22">
    <source>
        <dbReference type="PDB" id="2NRB"/>
    </source>
</evidence>
<evidence type="ECO:0007829" key="23">
    <source>
        <dbReference type="PDB" id="2NRC"/>
    </source>
</evidence>
<evidence type="ECO:0007829" key="24">
    <source>
        <dbReference type="PDB" id="3K6M"/>
    </source>
</evidence>
<comment type="function">
    <text evidence="2 5 9 20">Key enzyme for ketone body catabolism (By similarity). Catalyzes the first, rate-limiting step of ketone body utilization in extrahepatic tissues, by transferring coenzyme A (CoA) from a donor thiolester species (succinyl-CoA) to an acceptor carboxylate (acetoacetate), and produces acetoacetyl-CoA. Acetoacetyl-CoA is further metabolized by acetoacetyl-CoA thiolase into two acetyl-CoA molecules which enter the citric acid cycle for energy production (Probable) (PubMed:11327867, PubMed:17718512). Forms a dimeric enzyme where both of the subunits are able to form enzyme-CoA thiolester intermediates, but only one subunit is competent to transfer the CoA moiety to the acceptor carboxylate (3-oxo acid) and produce a new acyl-CoA (PubMed:11327867). Formation of the enzyme-CoA intermediate proceeds via an unstable anhydride species formed between the carboxylate groups of the enzyme and substrate (PubMed:17718512).</text>
</comment>
<comment type="catalytic activity">
    <reaction evidence="5 9">
        <text>a 3-oxo acid + succinyl-CoA = a 3-oxoacyl-CoA + succinate</text>
        <dbReference type="Rhea" id="RHEA:24564"/>
        <dbReference type="ChEBI" id="CHEBI:30031"/>
        <dbReference type="ChEBI" id="CHEBI:35973"/>
        <dbReference type="ChEBI" id="CHEBI:57292"/>
        <dbReference type="ChEBI" id="CHEBI:90726"/>
        <dbReference type="EC" id="2.8.3.5"/>
    </reaction>
    <physiologicalReaction direction="left-to-right" evidence="5 9">
        <dbReference type="Rhea" id="RHEA:24565"/>
    </physiologicalReaction>
</comment>
<comment type="catalytic activity">
    <reaction evidence="5 9">
        <text>acetoacetate + succinyl-CoA = acetoacetyl-CoA + succinate</text>
        <dbReference type="Rhea" id="RHEA:25480"/>
        <dbReference type="ChEBI" id="CHEBI:13705"/>
        <dbReference type="ChEBI" id="CHEBI:30031"/>
        <dbReference type="ChEBI" id="CHEBI:57286"/>
        <dbReference type="ChEBI" id="CHEBI:57292"/>
        <dbReference type="EC" id="2.8.3.5"/>
    </reaction>
    <physiologicalReaction direction="left-to-right" evidence="5 9">
        <dbReference type="Rhea" id="RHEA:25481"/>
    </physiologicalReaction>
</comment>
<comment type="biophysicochemical properties">
    <kinetics>
        <KM evidence="9">0.2 mM for acetoacetyl-CoA</KM>
        <KM evidence="9">20 mM for succinate</KM>
        <KM evidence="9">6.5 mM for succinyl-CoA</KM>
        <KM evidence="9">0.1 mM for acetoacetate</KM>
    </kinetics>
</comment>
<comment type="pathway">
    <text evidence="18 19">Ketone metabolism; succinyl-CoA degradation; acetoacetyl-CoA from succinyl-CoA: step 1/1.</text>
</comment>
<comment type="subunit">
    <text evidence="5 6 7 9 10 11 13">Homodimer (PubMed:11327867, PubMed:12463743, PubMed:15388917, PubMed:17718512, PubMed:20606260, PubMed:20977214, Ref.6). Only one subunit is competent to transfer the CoA moiety to the acceptor carboxylate (3-oxo acid) (PubMed:11327867).</text>
</comment>
<comment type="subcellular location">
    <subcellularLocation>
        <location evidence="1">Mitochondrion</location>
    </subcellularLocation>
</comment>
<comment type="similarity">
    <text evidence="17">Belongs to the 3-oxoacid CoA-transferase family.</text>
</comment>
<protein>
    <recommendedName>
        <fullName evidence="15">Succinyl-CoA:3-ketoacid coenzyme A transferase 1, mitochondrial</fullName>
        <shortName evidence="15 16">SCOT</shortName>
        <ecNumber evidence="5 9">2.8.3.5</ecNumber>
    </recommendedName>
    <alternativeName>
        <fullName>3-oxoacid CoA-transferase 1</fullName>
    </alternativeName>
    <alternativeName>
        <fullName>Somatic-type succinyl-CoA:3-oxoacid CoA-transferase</fullName>
        <shortName>SCOT-s</shortName>
    </alternativeName>
    <alternativeName>
        <fullName evidence="14">Succinate-coenzyme A transferase</fullName>
    </alternativeName>
    <alternativeName>
        <fullName evidence="16">Succinyl-CoA:3-oxoacid CoA transferase</fullName>
    </alternativeName>
</protein>
<gene>
    <name type="primary">OXCT1</name>
    <name type="synonym">OXCT</name>
    <name type="synonym">SCOT</name>
</gene>
<proteinExistence type="evidence at protein level"/>